<comment type="function">
    <text evidence="1">Catalyzes the NADPH-dependent reduction of N-acetyl-5-glutamyl phosphate to yield N-acetyl-L-glutamate 5-semialdehyde.</text>
</comment>
<comment type="catalytic activity">
    <reaction evidence="1">
        <text>N-acetyl-L-glutamate 5-semialdehyde + phosphate + NADP(+) = N-acetyl-L-glutamyl 5-phosphate + NADPH + H(+)</text>
        <dbReference type="Rhea" id="RHEA:21588"/>
        <dbReference type="ChEBI" id="CHEBI:15378"/>
        <dbReference type="ChEBI" id="CHEBI:29123"/>
        <dbReference type="ChEBI" id="CHEBI:43474"/>
        <dbReference type="ChEBI" id="CHEBI:57783"/>
        <dbReference type="ChEBI" id="CHEBI:57936"/>
        <dbReference type="ChEBI" id="CHEBI:58349"/>
        <dbReference type="EC" id="1.2.1.38"/>
    </reaction>
</comment>
<comment type="pathway">
    <text evidence="1">Amino-acid biosynthesis; L-arginine biosynthesis; N(2)-acetyl-L-ornithine from L-glutamate: step 3/4.</text>
</comment>
<comment type="subcellular location">
    <subcellularLocation>
        <location evidence="1">Cytoplasm</location>
    </subcellularLocation>
</comment>
<comment type="similarity">
    <text evidence="1">Belongs to the NAGSA dehydrogenase family. Type 2 subfamily.</text>
</comment>
<organism>
    <name type="scientific">Rhizobium rhizogenes (strain K84 / ATCC BAA-868)</name>
    <name type="common">Agrobacterium radiobacter</name>
    <dbReference type="NCBI Taxonomy" id="311403"/>
    <lineage>
        <taxon>Bacteria</taxon>
        <taxon>Pseudomonadati</taxon>
        <taxon>Pseudomonadota</taxon>
        <taxon>Alphaproteobacteria</taxon>
        <taxon>Hyphomicrobiales</taxon>
        <taxon>Rhizobiaceae</taxon>
        <taxon>Rhizobium/Agrobacterium group</taxon>
        <taxon>Rhizobium</taxon>
    </lineage>
</organism>
<dbReference type="EC" id="1.2.1.38" evidence="1"/>
<dbReference type="EMBL" id="CP000628">
    <property type="protein sequence ID" value="ACM26150.1"/>
    <property type="molecule type" value="Genomic_DNA"/>
</dbReference>
<dbReference type="RefSeq" id="WP_007692732.1">
    <property type="nucleotide sequence ID" value="NC_011985.1"/>
</dbReference>
<dbReference type="SMR" id="B9JD13"/>
<dbReference type="STRING" id="311403.Arad_1804"/>
<dbReference type="GeneID" id="86848029"/>
<dbReference type="KEGG" id="ara:Arad_1804"/>
<dbReference type="eggNOG" id="COG0002">
    <property type="taxonomic scope" value="Bacteria"/>
</dbReference>
<dbReference type="HOGENOM" id="CLU_077118_0_0_5"/>
<dbReference type="UniPathway" id="UPA00068">
    <property type="reaction ID" value="UER00108"/>
</dbReference>
<dbReference type="Proteomes" id="UP000001600">
    <property type="component" value="Chromosome 1"/>
</dbReference>
<dbReference type="GO" id="GO:0005737">
    <property type="term" value="C:cytoplasm"/>
    <property type="evidence" value="ECO:0007669"/>
    <property type="project" value="UniProtKB-SubCell"/>
</dbReference>
<dbReference type="GO" id="GO:0003942">
    <property type="term" value="F:N-acetyl-gamma-glutamyl-phosphate reductase activity"/>
    <property type="evidence" value="ECO:0007669"/>
    <property type="project" value="UniProtKB-UniRule"/>
</dbReference>
<dbReference type="GO" id="GO:0051287">
    <property type="term" value="F:NAD binding"/>
    <property type="evidence" value="ECO:0007669"/>
    <property type="project" value="InterPro"/>
</dbReference>
<dbReference type="GO" id="GO:0006526">
    <property type="term" value="P:L-arginine biosynthetic process"/>
    <property type="evidence" value="ECO:0007669"/>
    <property type="project" value="UniProtKB-UniRule"/>
</dbReference>
<dbReference type="CDD" id="cd23935">
    <property type="entry name" value="AGPR_2_C"/>
    <property type="match status" value="1"/>
</dbReference>
<dbReference type="CDD" id="cd17896">
    <property type="entry name" value="AGPR_2_N"/>
    <property type="match status" value="1"/>
</dbReference>
<dbReference type="Gene3D" id="3.30.360.10">
    <property type="entry name" value="Dihydrodipicolinate Reductase, domain 2"/>
    <property type="match status" value="1"/>
</dbReference>
<dbReference type="Gene3D" id="3.40.50.720">
    <property type="entry name" value="NAD(P)-binding Rossmann-like Domain"/>
    <property type="match status" value="1"/>
</dbReference>
<dbReference type="HAMAP" id="MF_01110">
    <property type="entry name" value="ArgC_type2"/>
    <property type="match status" value="1"/>
</dbReference>
<dbReference type="InterPro" id="IPR023013">
    <property type="entry name" value="AGPR_AS"/>
</dbReference>
<dbReference type="InterPro" id="IPR010136">
    <property type="entry name" value="AGPR_type-2"/>
</dbReference>
<dbReference type="InterPro" id="IPR036291">
    <property type="entry name" value="NAD(P)-bd_dom_sf"/>
</dbReference>
<dbReference type="InterPro" id="IPR050085">
    <property type="entry name" value="NAGSA_dehydrogenase"/>
</dbReference>
<dbReference type="InterPro" id="IPR000534">
    <property type="entry name" value="Semialdehyde_DH_NAD-bd"/>
</dbReference>
<dbReference type="NCBIfam" id="TIGR01851">
    <property type="entry name" value="argC_other"/>
    <property type="match status" value="1"/>
</dbReference>
<dbReference type="PANTHER" id="PTHR32338:SF10">
    <property type="entry name" value="N-ACETYL-GAMMA-GLUTAMYL-PHOSPHATE REDUCTASE, CHLOROPLASTIC-RELATED"/>
    <property type="match status" value="1"/>
</dbReference>
<dbReference type="PANTHER" id="PTHR32338">
    <property type="entry name" value="N-ACETYL-GAMMA-GLUTAMYL-PHOSPHATE REDUCTASE, CHLOROPLASTIC-RELATED-RELATED"/>
    <property type="match status" value="1"/>
</dbReference>
<dbReference type="Pfam" id="PF01118">
    <property type="entry name" value="Semialdhyde_dh"/>
    <property type="match status" value="1"/>
</dbReference>
<dbReference type="Pfam" id="PF22698">
    <property type="entry name" value="Semialdhyde_dhC_1"/>
    <property type="match status" value="1"/>
</dbReference>
<dbReference type="SMART" id="SM00859">
    <property type="entry name" value="Semialdhyde_dh"/>
    <property type="match status" value="1"/>
</dbReference>
<dbReference type="SUPFAM" id="SSF55347">
    <property type="entry name" value="Glyceraldehyde-3-phosphate dehydrogenase-like, C-terminal domain"/>
    <property type="match status" value="1"/>
</dbReference>
<dbReference type="SUPFAM" id="SSF51735">
    <property type="entry name" value="NAD(P)-binding Rossmann-fold domains"/>
    <property type="match status" value="1"/>
</dbReference>
<dbReference type="PROSITE" id="PS01224">
    <property type="entry name" value="ARGC"/>
    <property type="match status" value="1"/>
</dbReference>
<gene>
    <name evidence="1" type="primary">argC</name>
    <name type="ordered locus">Arad_1804</name>
</gene>
<accession>B9JD13</accession>
<evidence type="ECO:0000255" key="1">
    <source>
        <dbReference type="HAMAP-Rule" id="MF_01110"/>
    </source>
</evidence>
<keyword id="KW-0028">Amino-acid biosynthesis</keyword>
<keyword id="KW-0055">Arginine biosynthesis</keyword>
<keyword id="KW-0963">Cytoplasm</keyword>
<keyword id="KW-0521">NADP</keyword>
<keyword id="KW-0560">Oxidoreductase</keyword>
<reference key="1">
    <citation type="journal article" date="2009" name="J. Bacteriol.">
        <title>Genome sequences of three Agrobacterium biovars help elucidate the evolution of multichromosome genomes in bacteria.</title>
        <authorList>
            <person name="Slater S.C."/>
            <person name="Goldman B.S."/>
            <person name="Goodner B."/>
            <person name="Setubal J.C."/>
            <person name="Farrand S.K."/>
            <person name="Nester E.W."/>
            <person name="Burr T.J."/>
            <person name="Banta L."/>
            <person name="Dickerman A.W."/>
            <person name="Paulsen I."/>
            <person name="Otten L."/>
            <person name="Suen G."/>
            <person name="Welch R."/>
            <person name="Almeida N.F."/>
            <person name="Arnold F."/>
            <person name="Burton O.T."/>
            <person name="Du Z."/>
            <person name="Ewing A."/>
            <person name="Godsy E."/>
            <person name="Heisel S."/>
            <person name="Houmiel K.L."/>
            <person name="Jhaveri J."/>
            <person name="Lu J."/>
            <person name="Miller N.M."/>
            <person name="Norton S."/>
            <person name="Chen Q."/>
            <person name="Phoolcharoen W."/>
            <person name="Ohlin V."/>
            <person name="Ondrusek D."/>
            <person name="Pride N."/>
            <person name="Stricklin S.L."/>
            <person name="Sun J."/>
            <person name="Wheeler C."/>
            <person name="Wilson L."/>
            <person name="Zhu H."/>
            <person name="Wood D.W."/>
        </authorList>
    </citation>
    <scope>NUCLEOTIDE SEQUENCE [LARGE SCALE GENOMIC DNA]</scope>
    <source>
        <strain>K84 / ATCC BAA-868</strain>
    </source>
</reference>
<protein>
    <recommendedName>
        <fullName evidence="1">N-acetyl-gamma-glutamyl-phosphate reductase</fullName>
        <shortName evidence="1">AGPR</shortName>
        <ecNumber evidence="1">1.2.1.38</ecNumber>
    </recommendedName>
    <alternativeName>
        <fullName evidence="1">N-acetyl-glutamate semialdehyde dehydrogenase</fullName>
        <shortName evidence="1">NAGSA dehydrogenase</shortName>
    </alternativeName>
</protein>
<sequence length="310" mass="33018">MAPKIFIDGEHGTTGLQIRTRMADRRDVELLSIPEAERRNAAMREDMLNSADIAILCLPDDASKEAVKMVSANNNVRVIDTSTAFRVHPDWAYGFAEMDKDQGGKITSARFVANPGCYPTGAVALIRPLRAAGILPDGYPVTVNAVSGYTGGGKQMIAQMENADHPDAITAPHFLYGLPLTHKHVPEMTTHGLLDRAPIFSPSVGKFAQGMIVQVPLHLDNLAEGATMESIHAALVGHFAGQDVVQVVSLAESRALPRINAVELAGKDTMKLFVFGTPGTSQVNLVALLDNLGKGASGAAVQNMDLMLSA</sequence>
<feature type="chain" id="PRO_1000163991" description="N-acetyl-gamma-glutamyl-phosphate reductase">
    <location>
        <begin position="1"/>
        <end position="310"/>
    </location>
</feature>
<feature type="active site" evidence="1">
    <location>
        <position position="117"/>
    </location>
</feature>
<proteinExistence type="inferred from homology"/>
<name>ARGC_RHIR8</name>